<accession>Q7VKZ5</accession>
<organism>
    <name type="scientific">Haemophilus ducreyi (strain 35000HP / ATCC 700724)</name>
    <dbReference type="NCBI Taxonomy" id="233412"/>
    <lineage>
        <taxon>Bacteria</taxon>
        <taxon>Pseudomonadati</taxon>
        <taxon>Pseudomonadota</taxon>
        <taxon>Gammaproteobacteria</taxon>
        <taxon>Pasteurellales</taxon>
        <taxon>Pasteurellaceae</taxon>
        <taxon>Haemophilus</taxon>
    </lineage>
</organism>
<evidence type="ECO:0000255" key="1">
    <source>
        <dbReference type="HAMAP-Rule" id="MF_01053"/>
    </source>
</evidence>
<reference key="1">
    <citation type="submission" date="2003-06" db="EMBL/GenBank/DDBJ databases">
        <title>The complete genome sequence of Haemophilus ducreyi.</title>
        <authorList>
            <person name="Munson R.S. Jr."/>
            <person name="Ray W.C."/>
            <person name="Mahairas G."/>
            <person name="Sabo P."/>
            <person name="Mungur R."/>
            <person name="Johnson L."/>
            <person name="Nguyen D."/>
            <person name="Wang J."/>
            <person name="Forst C."/>
            <person name="Hood L."/>
        </authorList>
    </citation>
    <scope>NUCLEOTIDE SEQUENCE [LARGE SCALE GENOMIC DNA]</scope>
    <source>
        <strain>35000HP / ATCC 700724</strain>
    </source>
</reference>
<feature type="chain" id="PRO_0000214649" description="UPF0231 protein HD_1708">
    <location>
        <begin position="1"/>
        <end position="125"/>
    </location>
</feature>
<sequence>MEYQFTHSIHGIVAKCSMEHEVFARWLNTEIIGHTQNLHNILAEIEKCRAAFPNHYECVFEGQEYSLYFDCDEVIVKVNNLAMAIDEVIVEEGLQLYDQESVAFCGLEDFERFLQAYHKFSSTYH</sequence>
<keyword id="KW-1185">Reference proteome</keyword>
<comment type="similarity">
    <text evidence="1">Belongs to the UPF0231 family.</text>
</comment>
<proteinExistence type="inferred from homology"/>
<dbReference type="EMBL" id="AE017143">
    <property type="protein sequence ID" value="AAP96468.1"/>
    <property type="molecule type" value="Genomic_DNA"/>
</dbReference>
<dbReference type="RefSeq" id="WP_010945497.1">
    <property type="nucleotide sequence ID" value="NC_002940.2"/>
</dbReference>
<dbReference type="STRING" id="233412.HD_1708"/>
<dbReference type="KEGG" id="hdu:HD_1708"/>
<dbReference type="eggNOG" id="COG3112">
    <property type="taxonomic scope" value="Bacteria"/>
</dbReference>
<dbReference type="HOGENOM" id="CLU_139226_0_0_6"/>
<dbReference type="OrthoDB" id="5739292at2"/>
<dbReference type="Proteomes" id="UP000001022">
    <property type="component" value="Chromosome"/>
</dbReference>
<dbReference type="HAMAP" id="MF_01053">
    <property type="entry name" value="UPF0231"/>
    <property type="match status" value="1"/>
</dbReference>
<dbReference type="InterPro" id="IPR008249">
    <property type="entry name" value="UPF0231"/>
</dbReference>
<dbReference type="NCBIfam" id="NF003575">
    <property type="entry name" value="PRK05248.1-2"/>
    <property type="match status" value="1"/>
</dbReference>
<dbReference type="Pfam" id="PF06062">
    <property type="entry name" value="UPF0231"/>
    <property type="match status" value="1"/>
</dbReference>
<dbReference type="PIRSF" id="PIRSF006287">
    <property type="entry name" value="UCP006287"/>
    <property type="match status" value="1"/>
</dbReference>
<name>Y1708_HAEDU</name>
<gene>
    <name type="ordered locus">HD_1708</name>
</gene>
<protein>
    <recommendedName>
        <fullName evidence="1">UPF0231 protein HD_1708</fullName>
    </recommendedName>
</protein>